<gene>
    <name evidence="1" type="primary">rhaD</name>
    <name type="ordered locus">YPTB0383</name>
</gene>
<proteinExistence type="inferred from homology"/>
<keyword id="KW-0963">Cytoplasm</keyword>
<keyword id="KW-0456">Lyase</keyword>
<keyword id="KW-0479">Metal-binding</keyword>
<keyword id="KW-0684">Rhamnose metabolism</keyword>
<keyword id="KW-0862">Zinc</keyword>
<accession>Q66FF5</accession>
<dbReference type="EC" id="4.1.2.19" evidence="1"/>
<dbReference type="EMBL" id="BX936398">
    <property type="protein sequence ID" value="CAH19623.1"/>
    <property type="molecule type" value="Genomic_DNA"/>
</dbReference>
<dbReference type="RefSeq" id="WP_011191600.1">
    <property type="nucleotide sequence ID" value="NC_006155.1"/>
</dbReference>
<dbReference type="SMR" id="Q66FF5"/>
<dbReference type="KEGG" id="ypo:BZ17_2187"/>
<dbReference type="KEGG" id="yps:YPTB0383"/>
<dbReference type="PATRIC" id="fig|273123.14.peg.2315"/>
<dbReference type="UniPathway" id="UPA00541">
    <property type="reaction ID" value="UER00603"/>
</dbReference>
<dbReference type="Proteomes" id="UP000001011">
    <property type="component" value="Chromosome"/>
</dbReference>
<dbReference type="GO" id="GO:0005829">
    <property type="term" value="C:cytosol"/>
    <property type="evidence" value="ECO:0007669"/>
    <property type="project" value="TreeGrafter"/>
</dbReference>
<dbReference type="GO" id="GO:0046872">
    <property type="term" value="F:metal ion binding"/>
    <property type="evidence" value="ECO:0007669"/>
    <property type="project" value="UniProtKB-KW"/>
</dbReference>
<dbReference type="GO" id="GO:0008994">
    <property type="term" value="F:rhamnulose-1-phosphate aldolase activity"/>
    <property type="evidence" value="ECO:0007669"/>
    <property type="project" value="UniProtKB-UniRule"/>
</dbReference>
<dbReference type="GO" id="GO:0019323">
    <property type="term" value="P:pentose catabolic process"/>
    <property type="evidence" value="ECO:0007669"/>
    <property type="project" value="TreeGrafter"/>
</dbReference>
<dbReference type="GO" id="GO:0019301">
    <property type="term" value="P:rhamnose catabolic process"/>
    <property type="evidence" value="ECO:0007669"/>
    <property type="project" value="UniProtKB-UniRule"/>
</dbReference>
<dbReference type="CDD" id="cd00398">
    <property type="entry name" value="Aldolase_II"/>
    <property type="match status" value="1"/>
</dbReference>
<dbReference type="FunFam" id="3.40.225.10:FF:000006">
    <property type="entry name" value="Rhamnulose-1-phosphate aldolase"/>
    <property type="match status" value="1"/>
</dbReference>
<dbReference type="Gene3D" id="3.40.225.10">
    <property type="entry name" value="Class II aldolase/adducin N-terminal domain"/>
    <property type="match status" value="1"/>
</dbReference>
<dbReference type="HAMAP" id="MF_00770">
    <property type="entry name" value="RhaD"/>
    <property type="match status" value="1"/>
</dbReference>
<dbReference type="InterPro" id="IPR050197">
    <property type="entry name" value="Aldolase_class_II_sugar_metab"/>
</dbReference>
<dbReference type="InterPro" id="IPR001303">
    <property type="entry name" value="Aldolase_II/adducin_N"/>
</dbReference>
<dbReference type="InterPro" id="IPR036409">
    <property type="entry name" value="Aldolase_II/adducin_N_sf"/>
</dbReference>
<dbReference type="InterPro" id="IPR013447">
    <property type="entry name" value="Rhamnulose-1-P_Aldolase"/>
</dbReference>
<dbReference type="NCBIfam" id="NF002963">
    <property type="entry name" value="PRK03634.1"/>
    <property type="match status" value="1"/>
</dbReference>
<dbReference type="NCBIfam" id="TIGR02624">
    <property type="entry name" value="rhamnu_1P_ald"/>
    <property type="match status" value="1"/>
</dbReference>
<dbReference type="PANTHER" id="PTHR22789">
    <property type="entry name" value="FUCULOSE PHOSPHATE ALDOLASE"/>
    <property type="match status" value="1"/>
</dbReference>
<dbReference type="PANTHER" id="PTHR22789:SF16">
    <property type="entry name" value="RHAMNULOSE-1-PHOSPHATE ALDOLASE"/>
    <property type="match status" value="1"/>
</dbReference>
<dbReference type="Pfam" id="PF00596">
    <property type="entry name" value="Aldolase_II"/>
    <property type="match status" value="1"/>
</dbReference>
<dbReference type="SMART" id="SM01007">
    <property type="entry name" value="Aldolase_II"/>
    <property type="match status" value="1"/>
</dbReference>
<dbReference type="SUPFAM" id="SSF53639">
    <property type="entry name" value="AraD/HMP-PK domain-like"/>
    <property type="match status" value="1"/>
</dbReference>
<sequence>MQAILSSWFIQGMIKATSDMWHKGWDERNGGNISLRLLAEEVEPYRRDFYQQPRKVELTQPAPELANSWFLVTGSGKFFRNVELNPAENLVLLQVSNDGMAYDIHWGLTQGGLPTSELAAHFQSHIVRMQVSGGTNRVIMHCHATNLIALSYVQKLENASFTRLLWEGSTECLVVFPDGIGIVPWMVPGTDGIGTQTAEQMREHSLVLWPFHGIFGSGPTLDDAFGLIDTAEKSAEIMVKVLSMGGKKQTISREQLIALAARFDVTPMAAALDA</sequence>
<reference key="1">
    <citation type="journal article" date="2004" name="Proc. Natl. Acad. Sci. U.S.A.">
        <title>Insights into the evolution of Yersinia pestis through whole-genome comparison with Yersinia pseudotuberculosis.</title>
        <authorList>
            <person name="Chain P.S.G."/>
            <person name="Carniel E."/>
            <person name="Larimer F.W."/>
            <person name="Lamerdin J."/>
            <person name="Stoutland P.O."/>
            <person name="Regala W.M."/>
            <person name="Georgescu A.M."/>
            <person name="Vergez L.M."/>
            <person name="Land M.L."/>
            <person name="Motin V.L."/>
            <person name="Brubaker R.R."/>
            <person name="Fowler J."/>
            <person name="Hinnebusch J."/>
            <person name="Marceau M."/>
            <person name="Medigue C."/>
            <person name="Simonet M."/>
            <person name="Chenal-Francisque V."/>
            <person name="Souza B."/>
            <person name="Dacheux D."/>
            <person name="Elliott J.M."/>
            <person name="Derbise A."/>
            <person name="Hauser L.J."/>
            <person name="Garcia E."/>
        </authorList>
    </citation>
    <scope>NUCLEOTIDE SEQUENCE [LARGE SCALE GENOMIC DNA]</scope>
    <source>
        <strain>IP32953</strain>
    </source>
</reference>
<comment type="function">
    <text evidence="1">Catalyzes the reversible cleavage of L-rhamnulose-1-phosphate to dihydroxyacetone phosphate (DHAP) and L-lactaldehyde.</text>
</comment>
<comment type="catalytic activity">
    <reaction evidence="1">
        <text>L-rhamnulose 1-phosphate = (S)-lactaldehyde + dihydroxyacetone phosphate</text>
        <dbReference type="Rhea" id="RHEA:19689"/>
        <dbReference type="ChEBI" id="CHEBI:18041"/>
        <dbReference type="ChEBI" id="CHEBI:57642"/>
        <dbReference type="ChEBI" id="CHEBI:58313"/>
        <dbReference type="EC" id="4.1.2.19"/>
    </reaction>
</comment>
<comment type="cofactor">
    <cofactor evidence="1">
        <name>Zn(2+)</name>
        <dbReference type="ChEBI" id="CHEBI:29105"/>
    </cofactor>
    <text evidence="1">Binds 1 zinc ion per subunit.</text>
</comment>
<comment type="pathway">
    <text evidence="1">Carbohydrate degradation; L-rhamnose degradation; glycerone phosphate from L-rhamnose: step 3/3.</text>
</comment>
<comment type="subunit">
    <text evidence="1">Homotetramer.</text>
</comment>
<comment type="subcellular location">
    <subcellularLocation>
        <location evidence="1">Cytoplasm</location>
    </subcellularLocation>
</comment>
<comment type="similarity">
    <text evidence="1">Belongs to the aldolase class II family. RhaD subfamily.</text>
</comment>
<protein>
    <recommendedName>
        <fullName evidence="1">Rhamnulose-1-phosphate aldolase</fullName>
        <ecNumber evidence="1">4.1.2.19</ecNumber>
    </recommendedName>
</protein>
<name>RHAD_YERPS</name>
<organism>
    <name type="scientific">Yersinia pseudotuberculosis serotype I (strain IP32953)</name>
    <dbReference type="NCBI Taxonomy" id="273123"/>
    <lineage>
        <taxon>Bacteria</taxon>
        <taxon>Pseudomonadati</taxon>
        <taxon>Pseudomonadota</taxon>
        <taxon>Gammaproteobacteria</taxon>
        <taxon>Enterobacterales</taxon>
        <taxon>Yersiniaceae</taxon>
        <taxon>Yersinia</taxon>
    </lineage>
</organism>
<evidence type="ECO:0000255" key="1">
    <source>
        <dbReference type="HAMAP-Rule" id="MF_00770"/>
    </source>
</evidence>
<feature type="chain" id="PRO_0000209673" description="Rhamnulose-1-phosphate aldolase">
    <location>
        <begin position="1"/>
        <end position="274"/>
    </location>
</feature>
<feature type="active site" evidence="1">
    <location>
        <position position="117"/>
    </location>
</feature>
<feature type="binding site" evidence="1">
    <location>
        <position position="141"/>
    </location>
    <ligand>
        <name>Zn(2+)</name>
        <dbReference type="ChEBI" id="CHEBI:29105"/>
    </ligand>
</feature>
<feature type="binding site" evidence="1">
    <location>
        <position position="143"/>
    </location>
    <ligand>
        <name>Zn(2+)</name>
        <dbReference type="ChEBI" id="CHEBI:29105"/>
    </ligand>
</feature>
<feature type="binding site" evidence="1">
    <location>
        <position position="212"/>
    </location>
    <ligand>
        <name>Zn(2+)</name>
        <dbReference type="ChEBI" id="CHEBI:29105"/>
    </ligand>
</feature>